<protein>
    <recommendedName>
        <fullName evidence="1">Nucleotide-binding protein Pfl01_4421</fullName>
    </recommendedName>
</protein>
<feature type="chain" id="PRO_0000261962" description="Nucleotide-binding protein Pfl01_4421">
    <location>
        <begin position="1"/>
        <end position="161"/>
    </location>
</feature>
<dbReference type="EMBL" id="CP000094">
    <property type="protein sequence ID" value="ABA76158.1"/>
    <property type="molecule type" value="Genomic_DNA"/>
</dbReference>
<dbReference type="RefSeq" id="WP_011335651.1">
    <property type="nucleotide sequence ID" value="NC_007492.2"/>
</dbReference>
<dbReference type="SMR" id="Q3K7U6"/>
<dbReference type="KEGG" id="pfo:Pfl01_4421"/>
<dbReference type="eggNOG" id="COG1666">
    <property type="taxonomic scope" value="Bacteria"/>
</dbReference>
<dbReference type="HOGENOM" id="CLU_099839_1_0_6"/>
<dbReference type="Proteomes" id="UP000002704">
    <property type="component" value="Chromosome"/>
</dbReference>
<dbReference type="GO" id="GO:0005829">
    <property type="term" value="C:cytosol"/>
    <property type="evidence" value="ECO:0007669"/>
    <property type="project" value="TreeGrafter"/>
</dbReference>
<dbReference type="GO" id="GO:0000166">
    <property type="term" value="F:nucleotide binding"/>
    <property type="evidence" value="ECO:0007669"/>
    <property type="project" value="TreeGrafter"/>
</dbReference>
<dbReference type="CDD" id="cd11740">
    <property type="entry name" value="YajQ_like"/>
    <property type="match status" value="1"/>
</dbReference>
<dbReference type="FunFam" id="3.30.70.860:FF:000001">
    <property type="entry name" value="UPF0234 protein YajQ"/>
    <property type="match status" value="1"/>
</dbReference>
<dbReference type="Gene3D" id="3.30.70.860">
    <property type="match status" value="1"/>
</dbReference>
<dbReference type="Gene3D" id="3.30.70.990">
    <property type="entry name" value="YajQ-like, domain 2"/>
    <property type="match status" value="1"/>
</dbReference>
<dbReference type="HAMAP" id="MF_00632">
    <property type="entry name" value="YajQ"/>
    <property type="match status" value="1"/>
</dbReference>
<dbReference type="InterPro" id="IPR007551">
    <property type="entry name" value="DUF520"/>
</dbReference>
<dbReference type="InterPro" id="IPR035571">
    <property type="entry name" value="UPF0234-like_C"/>
</dbReference>
<dbReference type="InterPro" id="IPR035570">
    <property type="entry name" value="UPF0234_N"/>
</dbReference>
<dbReference type="InterPro" id="IPR036183">
    <property type="entry name" value="YajQ-like_sf"/>
</dbReference>
<dbReference type="NCBIfam" id="NF003819">
    <property type="entry name" value="PRK05412.1"/>
    <property type="match status" value="1"/>
</dbReference>
<dbReference type="PANTHER" id="PTHR30476">
    <property type="entry name" value="UPF0234 PROTEIN YAJQ"/>
    <property type="match status" value="1"/>
</dbReference>
<dbReference type="PANTHER" id="PTHR30476:SF0">
    <property type="entry name" value="UPF0234 PROTEIN YAJQ"/>
    <property type="match status" value="1"/>
</dbReference>
<dbReference type="Pfam" id="PF04461">
    <property type="entry name" value="DUF520"/>
    <property type="match status" value="1"/>
</dbReference>
<dbReference type="SUPFAM" id="SSF89963">
    <property type="entry name" value="YajQ-like"/>
    <property type="match status" value="2"/>
</dbReference>
<comment type="function">
    <text evidence="1">Nucleotide-binding protein.</text>
</comment>
<comment type="similarity">
    <text evidence="1">Belongs to the YajQ family.</text>
</comment>
<keyword id="KW-0547">Nucleotide-binding</keyword>
<accession>Q3K7U6</accession>
<proteinExistence type="inferred from homology"/>
<gene>
    <name type="ordered locus">Pfl01_4421</name>
</gene>
<sequence>MPSFDVVSELDKHELTNAVENAVKELDRRYDLKGKGSFEYKEKDLTVHLTAEADFQLEAMIEILKLALVKRKIDVQCLEVKDSFASGKLMKQDAVLKEGIDKELAKKIVGHIKEAKLKVQAAIQGEQVRVTGKKRDDLQEAIAALRAKEFGMPLQFNNFRD</sequence>
<organism>
    <name type="scientific">Pseudomonas fluorescens (strain Pf0-1)</name>
    <dbReference type="NCBI Taxonomy" id="205922"/>
    <lineage>
        <taxon>Bacteria</taxon>
        <taxon>Pseudomonadati</taxon>
        <taxon>Pseudomonadota</taxon>
        <taxon>Gammaproteobacteria</taxon>
        <taxon>Pseudomonadales</taxon>
        <taxon>Pseudomonadaceae</taxon>
        <taxon>Pseudomonas</taxon>
    </lineage>
</organism>
<reference key="1">
    <citation type="journal article" date="2009" name="Genome Biol.">
        <title>Genomic and genetic analyses of diversity and plant interactions of Pseudomonas fluorescens.</title>
        <authorList>
            <person name="Silby M.W."/>
            <person name="Cerdeno-Tarraga A.M."/>
            <person name="Vernikos G.S."/>
            <person name="Giddens S.R."/>
            <person name="Jackson R.W."/>
            <person name="Preston G.M."/>
            <person name="Zhang X.-X."/>
            <person name="Moon C.D."/>
            <person name="Gehrig S.M."/>
            <person name="Godfrey S.A.C."/>
            <person name="Knight C.G."/>
            <person name="Malone J.G."/>
            <person name="Robinson Z."/>
            <person name="Spiers A.J."/>
            <person name="Harris S."/>
            <person name="Challis G.L."/>
            <person name="Yaxley A.M."/>
            <person name="Harris D."/>
            <person name="Seeger K."/>
            <person name="Murphy L."/>
            <person name="Rutter S."/>
            <person name="Squares R."/>
            <person name="Quail M.A."/>
            <person name="Saunders E."/>
            <person name="Mavromatis K."/>
            <person name="Brettin T.S."/>
            <person name="Bentley S.D."/>
            <person name="Hothersall J."/>
            <person name="Stephens E."/>
            <person name="Thomas C.M."/>
            <person name="Parkhill J."/>
            <person name="Levy S.B."/>
            <person name="Rainey P.B."/>
            <person name="Thomson N.R."/>
        </authorList>
    </citation>
    <scope>NUCLEOTIDE SEQUENCE [LARGE SCALE GENOMIC DNA]</scope>
    <source>
        <strain>Pf0-1</strain>
    </source>
</reference>
<name>Y4421_PSEPF</name>
<evidence type="ECO:0000255" key="1">
    <source>
        <dbReference type="HAMAP-Rule" id="MF_00632"/>
    </source>
</evidence>